<protein>
    <recommendedName>
        <fullName evidence="1">tRNA 5-methylaminomethyl-2-thiouridine biosynthesis bifunctional protein MnmC</fullName>
        <shortName evidence="1">tRNA mnm(5)s(2)U biosynthesis bifunctional protein</shortName>
    </recommendedName>
    <domain>
        <recommendedName>
            <fullName evidence="1">tRNA (mnm(5)s(2)U34)-methyltransferase</fullName>
            <ecNumber evidence="1">2.1.1.61</ecNumber>
        </recommendedName>
    </domain>
    <domain>
        <recommendedName>
            <fullName evidence="1">FAD-dependent cmnm(5)s(2)U34 oxidoreductase</fullName>
            <ecNumber evidence="1">1.5.-.-</ecNumber>
        </recommendedName>
    </domain>
</protein>
<keyword id="KW-0963">Cytoplasm</keyword>
<keyword id="KW-0274">FAD</keyword>
<keyword id="KW-0285">Flavoprotein</keyword>
<keyword id="KW-0489">Methyltransferase</keyword>
<keyword id="KW-0511">Multifunctional enzyme</keyword>
<keyword id="KW-0560">Oxidoreductase</keyword>
<keyword id="KW-0949">S-adenosyl-L-methionine</keyword>
<keyword id="KW-0808">Transferase</keyword>
<keyword id="KW-0819">tRNA processing</keyword>
<dbReference type="EC" id="2.1.1.61" evidence="1"/>
<dbReference type="EC" id="1.5.-.-" evidence="1"/>
<dbReference type="EMBL" id="AE016827">
    <property type="protein sequence ID" value="AAU38199.1"/>
    <property type="molecule type" value="Genomic_DNA"/>
</dbReference>
<dbReference type="RefSeq" id="WP_011200763.1">
    <property type="nucleotide sequence ID" value="NC_006300.1"/>
</dbReference>
<dbReference type="SMR" id="Q65S61"/>
<dbReference type="STRING" id="221988.MS1592"/>
<dbReference type="KEGG" id="msu:MS1592"/>
<dbReference type="eggNOG" id="COG0665">
    <property type="taxonomic scope" value="Bacteria"/>
</dbReference>
<dbReference type="eggNOG" id="COG4121">
    <property type="taxonomic scope" value="Bacteria"/>
</dbReference>
<dbReference type="HOGENOM" id="CLU_022427_2_1_6"/>
<dbReference type="OrthoDB" id="9786494at2"/>
<dbReference type="Proteomes" id="UP000000607">
    <property type="component" value="Chromosome"/>
</dbReference>
<dbReference type="GO" id="GO:0005737">
    <property type="term" value="C:cytoplasm"/>
    <property type="evidence" value="ECO:0007669"/>
    <property type="project" value="UniProtKB-SubCell"/>
</dbReference>
<dbReference type="GO" id="GO:0050660">
    <property type="term" value="F:flavin adenine dinucleotide binding"/>
    <property type="evidence" value="ECO:0007669"/>
    <property type="project" value="UniProtKB-UniRule"/>
</dbReference>
<dbReference type="GO" id="GO:0016645">
    <property type="term" value="F:oxidoreductase activity, acting on the CH-NH group of donors"/>
    <property type="evidence" value="ECO:0007669"/>
    <property type="project" value="InterPro"/>
</dbReference>
<dbReference type="GO" id="GO:0004808">
    <property type="term" value="F:tRNA (5-methylaminomethyl-2-thiouridylate)(34)-methyltransferase activity"/>
    <property type="evidence" value="ECO:0007669"/>
    <property type="project" value="UniProtKB-EC"/>
</dbReference>
<dbReference type="GO" id="GO:0032259">
    <property type="term" value="P:methylation"/>
    <property type="evidence" value="ECO:0007669"/>
    <property type="project" value="UniProtKB-KW"/>
</dbReference>
<dbReference type="GO" id="GO:0002098">
    <property type="term" value="P:tRNA wobble uridine modification"/>
    <property type="evidence" value="ECO:0007669"/>
    <property type="project" value="TreeGrafter"/>
</dbReference>
<dbReference type="FunFam" id="3.40.50.150:FF:000107">
    <property type="entry name" value="tRNA 5-methylaminomethyl-2-thiouridine biosynthesis bifunctional protein MnmC"/>
    <property type="match status" value="1"/>
</dbReference>
<dbReference type="Gene3D" id="3.30.9.10">
    <property type="entry name" value="D-Amino Acid Oxidase, subunit A, domain 2"/>
    <property type="match status" value="1"/>
</dbReference>
<dbReference type="Gene3D" id="3.50.50.60">
    <property type="entry name" value="FAD/NAD(P)-binding domain"/>
    <property type="match status" value="1"/>
</dbReference>
<dbReference type="Gene3D" id="3.40.50.150">
    <property type="entry name" value="Vaccinia Virus protein VP39"/>
    <property type="match status" value="1"/>
</dbReference>
<dbReference type="HAMAP" id="MF_01102">
    <property type="entry name" value="MnmC"/>
    <property type="match status" value="1"/>
</dbReference>
<dbReference type="InterPro" id="IPR006076">
    <property type="entry name" value="FAD-dep_OxRdtase"/>
</dbReference>
<dbReference type="InterPro" id="IPR036188">
    <property type="entry name" value="FAD/NAD-bd_sf"/>
</dbReference>
<dbReference type="InterPro" id="IPR008471">
    <property type="entry name" value="MnmC-like_methylTransf"/>
</dbReference>
<dbReference type="InterPro" id="IPR029063">
    <property type="entry name" value="SAM-dependent_MTases_sf"/>
</dbReference>
<dbReference type="InterPro" id="IPR023032">
    <property type="entry name" value="tRNA_MAMT_biosynth_bifunc_MnmC"/>
</dbReference>
<dbReference type="InterPro" id="IPR047785">
    <property type="entry name" value="tRNA_MNMC2"/>
</dbReference>
<dbReference type="InterPro" id="IPR017610">
    <property type="entry name" value="tRNA_S-uridine_synth_MnmC_C"/>
</dbReference>
<dbReference type="NCBIfam" id="TIGR03197">
    <property type="entry name" value="MnmC_Cterm"/>
    <property type="match status" value="1"/>
</dbReference>
<dbReference type="NCBIfam" id="NF002481">
    <property type="entry name" value="PRK01747.1-2"/>
    <property type="match status" value="1"/>
</dbReference>
<dbReference type="NCBIfam" id="NF002484">
    <property type="entry name" value="PRK01747.1-5"/>
    <property type="match status" value="1"/>
</dbReference>
<dbReference type="NCBIfam" id="NF033855">
    <property type="entry name" value="tRNA_MNMC2"/>
    <property type="match status" value="1"/>
</dbReference>
<dbReference type="PANTHER" id="PTHR13847">
    <property type="entry name" value="SARCOSINE DEHYDROGENASE-RELATED"/>
    <property type="match status" value="1"/>
</dbReference>
<dbReference type="PANTHER" id="PTHR13847:SF283">
    <property type="entry name" value="TRNA 5-METHYLAMINOMETHYL-2-THIOURIDINE BIOSYNTHESIS BIFUNCTIONAL PROTEIN MNMC"/>
    <property type="match status" value="1"/>
</dbReference>
<dbReference type="Pfam" id="PF01266">
    <property type="entry name" value="DAO"/>
    <property type="match status" value="1"/>
</dbReference>
<dbReference type="Pfam" id="PF05430">
    <property type="entry name" value="Methyltransf_30"/>
    <property type="match status" value="1"/>
</dbReference>
<dbReference type="SUPFAM" id="SSF51905">
    <property type="entry name" value="FAD/NAD(P)-binding domain"/>
    <property type="match status" value="1"/>
</dbReference>
<evidence type="ECO:0000255" key="1">
    <source>
        <dbReference type="HAMAP-Rule" id="MF_01102"/>
    </source>
</evidence>
<comment type="function">
    <text evidence="1">Catalyzes the last two steps in the biosynthesis of 5-methylaminomethyl-2-thiouridine (mnm(5)s(2)U) at the wobble position (U34) in tRNA. Catalyzes the FAD-dependent demodification of cmnm(5)s(2)U34 to nm(5)s(2)U34, followed by the transfer of a methyl group from S-adenosyl-L-methionine to nm(5)s(2)U34, to form mnm(5)s(2)U34.</text>
</comment>
<comment type="catalytic activity">
    <reaction evidence="1">
        <text>5-aminomethyl-2-thiouridine(34) in tRNA + S-adenosyl-L-methionine = 5-methylaminomethyl-2-thiouridine(34) in tRNA + S-adenosyl-L-homocysteine + H(+)</text>
        <dbReference type="Rhea" id="RHEA:19569"/>
        <dbReference type="Rhea" id="RHEA-COMP:10195"/>
        <dbReference type="Rhea" id="RHEA-COMP:10197"/>
        <dbReference type="ChEBI" id="CHEBI:15378"/>
        <dbReference type="ChEBI" id="CHEBI:57856"/>
        <dbReference type="ChEBI" id="CHEBI:59789"/>
        <dbReference type="ChEBI" id="CHEBI:74454"/>
        <dbReference type="ChEBI" id="CHEBI:74455"/>
        <dbReference type="EC" id="2.1.1.61"/>
    </reaction>
</comment>
<comment type="cofactor">
    <cofactor evidence="1">
        <name>FAD</name>
        <dbReference type="ChEBI" id="CHEBI:57692"/>
    </cofactor>
</comment>
<comment type="subcellular location">
    <subcellularLocation>
        <location evidence="1">Cytoplasm</location>
    </subcellularLocation>
</comment>
<comment type="similarity">
    <text evidence="1">In the N-terminal section; belongs to the methyltransferase superfamily. tRNA (mnm(5)s(2)U34)-methyltransferase family.</text>
</comment>
<comment type="similarity">
    <text evidence="1">In the C-terminal section; belongs to the DAO family.</text>
</comment>
<name>MNMC_MANSM</name>
<proteinExistence type="inferred from homology"/>
<organism>
    <name type="scientific">Mannheimia succiniciproducens (strain KCTC 0769BP / MBEL55E)</name>
    <dbReference type="NCBI Taxonomy" id="221988"/>
    <lineage>
        <taxon>Bacteria</taxon>
        <taxon>Pseudomonadati</taxon>
        <taxon>Pseudomonadota</taxon>
        <taxon>Gammaproteobacteria</taxon>
        <taxon>Pasteurellales</taxon>
        <taxon>Pasteurellaceae</taxon>
        <taxon>Basfia</taxon>
    </lineage>
</organism>
<reference key="1">
    <citation type="journal article" date="2004" name="Nat. Biotechnol.">
        <title>The genome sequence of the capnophilic rumen bacterium Mannheimia succiniciproducens.</title>
        <authorList>
            <person name="Hong S.H."/>
            <person name="Kim J.S."/>
            <person name="Lee S.Y."/>
            <person name="In Y.H."/>
            <person name="Choi S.S."/>
            <person name="Rih J.-K."/>
            <person name="Kim C.H."/>
            <person name="Jeong H."/>
            <person name="Hur C.G."/>
            <person name="Kim J.J."/>
        </authorList>
    </citation>
    <scope>NUCLEOTIDE SEQUENCE [LARGE SCALE GENOMIC DNA]</scope>
    <source>
        <strain>KCTC 0769BP / MBEL55E</strain>
    </source>
</reference>
<accession>Q65S61</accession>
<sequence>MLKVTTAHIHFNRDNTPVSEQFDDIYFSTADGLEESRYVFQEGNNLWRRWLQFGENHFVIAETGFGTGLNFLAVTALFREFRTQYPDSPLKRLFFISFEKYPMSCADLRSAHQAYPQFNSLAEQLRQNWLQPIVGCYRFHFEETVLDLWFGDIADNLPQLGDYMVNKIDAWFLDGFAPSKNPEMWNENLYKQMFRYTKPAGTFATFTAASAVKKGLESAGFSLQKRKGFGKKRECLQGFKPLNAEQNPAVHTPWLLSRSATLSENTDIAIIGGGISSLFSAISLLQRGANVTLYCEDEQPALNASGNKQGAFYPQLSDDDIHNIRFYIHAFAYGQQQLRWAIQQGIEFEHEFCGVALCAYDEKSAVKLAKISDYDWDTSLYQPLNQQELSEKAGLPLPCGGGFIPQGAWLAPRQFVQNGFAFAQKCGLKLKTFEKITALSQSEKGWILHNDKNEQFHHETVIIANGHKLKQFTQTARIPVYSVRGQVSQIPTSSQLLKLKSVLCYDGYLTPADQAKQFHCIGASHVRDCEDRDFSLQEQQENQAKIQLNIAEDWTKEVNTADNLARTGIRCAVRDRIPLVGNVPDFERQADEYRNIFNLRRRKQFIPQAAVFENLYLVGALGSRGLTSAPLLGEILASMIYGEPIPLSEDILHCLNPNRSWMRKLLKGTPVK</sequence>
<gene>
    <name evidence="1" type="primary">mnmC</name>
    <name type="ordered locus">MS1592</name>
</gene>
<feature type="chain" id="PRO_0000095018" description="tRNA 5-methylaminomethyl-2-thiouridine biosynthesis bifunctional protein MnmC">
    <location>
        <begin position="1"/>
        <end position="672"/>
    </location>
</feature>
<feature type="region of interest" description="tRNA (mnm(5)s(2)U34)-methyltransferase">
    <location>
        <begin position="1"/>
        <end position="241"/>
    </location>
</feature>
<feature type="region of interest" description="FAD-dependent cmnm(5)s(2)U34 oxidoreductase">
    <location>
        <begin position="271"/>
        <end position="672"/>
    </location>
</feature>